<feature type="chain" id="PRO_0000356036" description="Pentatricopeptide repeat-containing protein At2g30780">
    <location>
        <begin position="1"/>
        <end position="452"/>
    </location>
</feature>
<feature type="repeat" description="PPR 1">
    <location>
        <begin position="137"/>
        <end position="171"/>
    </location>
</feature>
<feature type="repeat" description="PPR 2">
    <location>
        <begin position="173"/>
        <end position="207"/>
    </location>
</feature>
<feature type="repeat" description="PPR 3">
    <location>
        <begin position="208"/>
        <end position="242"/>
    </location>
</feature>
<feature type="repeat" description="PPR 4">
    <location>
        <begin position="243"/>
        <end position="273"/>
    </location>
</feature>
<feature type="repeat" description="PPR 5">
    <location>
        <begin position="350"/>
        <end position="384"/>
    </location>
</feature>
<feature type="repeat" description="PPR 6">
    <location>
        <begin position="385"/>
        <end position="419"/>
    </location>
</feature>
<feature type="repeat" description="PPR 7">
    <location>
        <begin position="420"/>
        <end position="452"/>
    </location>
</feature>
<dbReference type="EMBL" id="AC002340">
    <property type="protein sequence ID" value="AAC02749.1"/>
    <property type="molecule type" value="Genomic_DNA"/>
</dbReference>
<dbReference type="EMBL" id="CP002685">
    <property type="protein sequence ID" value="AEC08440.1"/>
    <property type="molecule type" value="Genomic_DNA"/>
</dbReference>
<dbReference type="EMBL" id="CP002685">
    <property type="protein sequence ID" value="ANM62653.1"/>
    <property type="molecule type" value="Genomic_DNA"/>
</dbReference>
<dbReference type="EMBL" id="AK228453">
    <property type="protein sequence ID" value="BAF00380.1"/>
    <property type="molecule type" value="mRNA"/>
</dbReference>
<dbReference type="PIR" id="F84712">
    <property type="entry name" value="F84712"/>
</dbReference>
<dbReference type="RefSeq" id="NP_001324795.1">
    <property type="nucleotide sequence ID" value="NM_001336302.1"/>
</dbReference>
<dbReference type="RefSeq" id="NP_180636.1">
    <property type="nucleotide sequence ID" value="NM_128631.4"/>
</dbReference>
<dbReference type="SMR" id="O49343"/>
<dbReference type="FunCoup" id="O49343">
    <property type="interactions" value="2192"/>
</dbReference>
<dbReference type="STRING" id="3702.O49343"/>
<dbReference type="iPTMnet" id="O49343"/>
<dbReference type="PaxDb" id="3702-AT2G30780.1"/>
<dbReference type="ProteomicsDB" id="249146"/>
<dbReference type="EnsemblPlants" id="AT2G30780.1">
    <property type="protein sequence ID" value="AT2G30780.1"/>
    <property type="gene ID" value="AT2G30780"/>
</dbReference>
<dbReference type="EnsemblPlants" id="AT2G30780.2">
    <property type="protein sequence ID" value="AT2G30780.2"/>
    <property type="gene ID" value="AT2G30780"/>
</dbReference>
<dbReference type="GeneID" id="817629"/>
<dbReference type="Gramene" id="AT2G30780.1">
    <property type="protein sequence ID" value="AT2G30780.1"/>
    <property type="gene ID" value="AT2G30780"/>
</dbReference>
<dbReference type="Gramene" id="AT2G30780.2">
    <property type="protein sequence ID" value="AT2G30780.2"/>
    <property type="gene ID" value="AT2G30780"/>
</dbReference>
<dbReference type="KEGG" id="ath:AT2G30780"/>
<dbReference type="Araport" id="AT2G30780"/>
<dbReference type="TAIR" id="AT2G30780"/>
<dbReference type="eggNOG" id="KOG4197">
    <property type="taxonomic scope" value="Eukaryota"/>
</dbReference>
<dbReference type="HOGENOM" id="CLU_034990_0_0_1"/>
<dbReference type="InParanoid" id="O49343"/>
<dbReference type="OMA" id="PENEYRP"/>
<dbReference type="PhylomeDB" id="O49343"/>
<dbReference type="PRO" id="PR:O49343"/>
<dbReference type="Proteomes" id="UP000006548">
    <property type="component" value="Chromosome 2"/>
</dbReference>
<dbReference type="ExpressionAtlas" id="O49343">
    <property type="expression patterns" value="baseline and differential"/>
</dbReference>
<dbReference type="GO" id="GO:0003729">
    <property type="term" value="F:mRNA binding"/>
    <property type="evidence" value="ECO:0000314"/>
    <property type="project" value="TAIR"/>
</dbReference>
<dbReference type="Gene3D" id="1.25.40.10">
    <property type="entry name" value="Tetratricopeptide repeat domain"/>
    <property type="match status" value="3"/>
</dbReference>
<dbReference type="InterPro" id="IPR002885">
    <property type="entry name" value="Pentatricopeptide_rpt"/>
</dbReference>
<dbReference type="InterPro" id="IPR044179">
    <property type="entry name" value="PPR5-like"/>
</dbReference>
<dbReference type="InterPro" id="IPR011990">
    <property type="entry name" value="TPR-like_helical_dom_sf"/>
</dbReference>
<dbReference type="NCBIfam" id="TIGR00756">
    <property type="entry name" value="PPR"/>
    <property type="match status" value="3"/>
</dbReference>
<dbReference type="PANTHER" id="PTHR47874">
    <property type="entry name" value="EXPRESSED PROTEIN"/>
    <property type="match status" value="1"/>
</dbReference>
<dbReference type="PANTHER" id="PTHR47874:SF1">
    <property type="entry name" value="OS05G0407900 PROTEIN"/>
    <property type="match status" value="1"/>
</dbReference>
<dbReference type="Pfam" id="PF01535">
    <property type="entry name" value="PPR"/>
    <property type="match status" value="1"/>
</dbReference>
<dbReference type="Pfam" id="PF13041">
    <property type="entry name" value="PPR_2"/>
    <property type="match status" value="2"/>
</dbReference>
<dbReference type="PROSITE" id="PS51375">
    <property type="entry name" value="PPR"/>
    <property type="match status" value="7"/>
</dbReference>
<sequence length="452" mass="52027">MASNFVKLGSQFIGKLTRVTSLPAHHTDLVQRVSILKDELLTIGNSKEKFQNVLDQKGQWLFRTYRDGAGILELMDQLFPRHYLALQVLEWRRGQKDYCIPLTSEEYAKGIKIAGRARDINLAVYLFDEAAKKRMQTASVYNSLMSVYMWNGLAEECQSLFKDFRRQTHCAPTVVTYNILVSVYGRLLMVKNMEAAFEELQKVKLPPNSVTYNFLIAGYMTAWNWDKMEATFQEMKRGPVEPDTDTYQLMLRGYANSGNLNRMEEMYEVIKDQVGVNSGPLVRAMICAYCKKAVEDRVQKIENLLSLLSGEEYLPWLNVLLIRLYAQEDFVEAMESKINEAFEQKTCVNKSSIMRAIIAAYFRCNEVDNLANFVKRAESAGWKLCRSLYHCKIMMYGSQKRFEEMEGVVNEMAETNYGLVTKTFAIMIKAYKNHGMESDAEKVKGKMLKRGL</sequence>
<comment type="similarity">
    <text evidence="1">Belongs to the PPR family. P subfamily.</text>
</comment>
<comment type="online information" name="Pentatricopeptide repeat proteins">
    <link uri="https://ppr.plantenergy.uwa.edu.au"/>
</comment>
<evidence type="ECO:0000305" key="1"/>
<organism>
    <name type="scientific">Arabidopsis thaliana</name>
    <name type="common">Mouse-ear cress</name>
    <dbReference type="NCBI Taxonomy" id="3702"/>
    <lineage>
        <taxon>Eukaryota</taxon>
        <taxon>Viridiplantae</taxon>
        <taxon>Streptophyta</taxon>
        <taxon>Embryophyta</taxon>
        <taxon>Tracheophyta</taxon>
        <taxon>Spermatophyta</taxon>
        <taxon>Magnoliopsida</taxon>
        <taxon>eudicotyledons</taxon>
        <taxon>Gunneridae</taxon>
        <taxon>Pentapetalae</taxon>
        <taxon>rosids</taxon>
        <taxon>malvids</taxon>
        <taxon>Brassicales</taxon>
        <taxon>Brassicaceae</taxon>
        <taxon>Camelineae</taxon>
        <taxon>Arabidopsis</taxon>
    </lineage>
</organism>
<proteinExistence type="evidence at transcript level"/>
<keyword id="KW-1185">Reference proteome</keyword>
<keyword id="KW-0677">Repeat</keyword>
<name>PP177_ARATH</name>
<gene>
    <name type="ordered locus">At2g30780</name>
    <name type="ORF">T11J7.17</name>
</gene>
<reference key="1">
    <citation type="journal article" date="1999" name="Nature">
        <title>Sequence and analysis of chromosome 2 of the plant Arabidopsis thaliana.</title>
        <authorList>
            <person name="Lin X."/>
            <person name="Kaul S."/>
            <person name="Rounsley S.D."/>
            <person name="Shea T.P."/>
            <person name="Benito M.-I."/>
            <person name="Town C.D."/>
            <person name="Fujii C.Y."/>
            <person name="Mason T.M."/>
            <person name="Bowman C.L."/>
            <person name="Barnstead M.E."/>
            <person name="Feldblyum T.V."/>
            <person name="Buell C.R."/>
            <person name="Ketchum K.A."/>
            <person name="Lee J.J."/>
            <person name="Ronning C.M."/>
            <person name="Koo H.L."/>
            <person name="Moffat K.S."/>
            <person name="Cronin L.A."/>
            <person name="Shen M."/>
            <person name="Pai G."/>
            <person name="Van Aken S."/>
            <person name="Umayam L."/>
            <person name="Tallon L.J."/>
            <person name="Gill J.E."/>
            <person name="Adams M.D."/>
            <person name="Carrera A.J."/>
            <person name="Creasy T.H."/>
            <person name="Goodman H.M."/>
            <person name="Somerville C.R."/>
            <person name="Copenhaver G.P."/>
            <person name="Preuss D."/>
            <person name="Nierman W.C."/>
            <person name="White O."/>
            <person name="Eisen J.A."/>
            <person name="Salzberg S.L."/>
            <person name="Fraser C.M."/>
            <person name="Venter J.C."/>
        </authorList>
    </citation>
    <scope>NUCLEOTIDE SEQUENCE [LARGE SCALE GENOMIC DNA]</scope>
    <source>
        <strain>cv. Columbia</strain>
    </source>
</reference>
<reference key="2">
    <citation type="journal article" date="2017" name="Plant J.">
        <title>Araport11: a complete reannotation of the Arabidopsis thaliana reference genome.</title>
        <authorList>
            <person name="Cheng C.Y."/>
            <person name="Krishnakumar V."/>
            <person name="Chan A.P."/>
            <person name="Thibaud-Nissen F."/>
            <person name="Schobel S."/>
            <person name="Town C.D."/>
        </authorList>
    </citation>
    <scope>GENOME REANNOTATION</scope>
    <source>
        <strain>cv. Columbia</strain>
    </source>
</reference>
<reference key="3">
    <citation type="submission" date="2006-07" db="EMBL/GenBank/DDBJ databases">
        <title>Large-scale analysis of RIKEN Arabidopsis full-length (RAFL) cDNAs.</title>
        <authorList>
            <person name="Totoki Y."/>
            <person name="Seki M."/>
            <person name="Ishida J."/>
            <person name="Nakajima M."/>
            <person name="Enju A."/>
            <person name="Kamiya A."/>
            <person name="Narusaka M."/>
            <person name="Shin-i T."/>
            <person name="Nakagawa M."/>
            <person name="Sakamoto N."/>
            <person name="Oishi K."/>
            <person name="Kohara Y."/>
            <person name="Kobayashi M."/>
            <person name="Toyoda A."/>
            <person name="Sakaki Y."/>
            <person name="Sakurai T."/>
            <person name="Iida K."/>
            <person name="Akiyama K."/>
            <person name="Satou M."/>
            <person name="Toyoda T."/>
            <person name="Konagaya A."/>
            <person name="Carninci P."/>
            <person name="Kawai J."/>
            <person name="Hayashizaki Y."/>
            <person name="Shinozaki K."/>
        </authorList>
    </citation>
    <scope>NUCLEOTIDE SEQUENCE [LARGE SCALE MRNA]</scope>
    <source>
        <strain>cv. Columbia</strain>
    </source>
</reference>
<reference key="4">
    <citation type="journal article" date="2004" name="Plant Cell">
        <title>Genome-wide analysis of Arabidopsis pentatricopeptide repeat proteins reveals their essential role in organelle biogenesis.</title>
        <authorList>
            <person name="Lurin C."/>
            <person name="Andres C."/>
            <person name="Aubourg S."/>
            <person name="Bellaoui M."/>
            <person name="Bitton F."/>
            <person name="Bruyere C."/>
            <person name="Caboche M."/>
            <person name="Debast C."/>
            <person name="Gualberto J."/>
            <person name="Hoffmann B."/>
            <person name="Lecharny A."/>
            <person name="Le Ret M."/>
            <person name="Martin-Magniette M.-L."/>
            <person name="Mireau H."/>
            <person name="Peeters N."/>
            <person name="Renou J.-P."/>
            <person name="Szurek B."/>
            <person name="Taconnat L."/>
            <person name="Small I."/>
        </authorList>
    </citation>
    <scope>GENE FAMILY</scope>
</reference>
<accession>O49343</accession>
<protein>
    <recommendedName>
        <fullName>Pentatricopeptide repeat-containing protein At2g30780</fullName>
    </recommendedName>
</protein>